<sequence length="194" mass="20850">MRLILLGPPGAGKGTQAGLLTKKHGIPQLSTGDMLRAAVAQQSEIGKRAKAVMDAGQLVSDEIVNQIVSERIDAPDCANGFILDGYPRTVPQAQALSQMLSGKGLKLDAVIELKVDENALVKRMESRVAETIAKGGQVRSDDNPEAFRKRLVEYREKTAPLSSYYAGTGELRIINGMAPVEEVTAEIERILVPA</sequence>
<evidence type="ECO:0000255" key="1">
    <source>
        <dbReference type="HAMAP-Rule" id="MF_00235"/>
    </source>
</evidence>
<reference key="1">
    <citation type="journal article" date="2005" name="J. Bacteriol.">
        <title>Completion of the genome sequence of Brucella abortus and comparison to the highly similar genomes of Brucella melitensis and Brucella suis.</title>
        <authorList>
            <person name="Halling S.M."/>
            <person name="Peterson-Burch B.D."/>
            <person name="Bricker B.J."/>
            <person name="Zuerner R.L."/>
            <person name="Qing Z."/>
            <person name="Li L.-L."/>
            <person name="Kapur V."/>
            <person name="Alt D.P."/>
            <person name="Olsen S.C."/>
        </authorList>
    </citation>
    <scope>NUCLEOTIDE SEQUENCE [LARGE SCALE GENOMIC DNA]</scope>
    <source>
        <strain>9-941</strain>
    </source>
</reference>
<feature type="chain" id="PRO_1000058792" description="Adenylate kinase">
    <location>
        <begin position="1"/>
        <end position="194"/>
    </location>
</feature>
<feature type="region of interest" description="NMP" evidence="1">
    <location>
        <begin position="30"/>
        <end position="59"/>
    </location>
</feature>
<feature type="region of interest" description="LID" evidence="1">
    <location>
        <begin position="126"/>
        <end position="142"/>
    </location>
</feature>
<feature type="binding site" evidence="1">
    <location>
        <begin position="10"/>
        <end position="15"/>
    </location>
    <ligand>
        <name>ATP</name>
        <dbReference type="ChEBI" id="CHEBI:30616"/>
    </ligand>
</feature>
<feature type="binding site" evidence="1">
    <location>
        <position position="31"/>
    </location>
    <ligand>
        <name>AMP</name>
        <dbReference type="ChEBI" id="CHEBI:456215"/>
    </ligand>
</feature>
<feature type="binding site" evidence="1">
    <location>
        <position position="36"/>
    </location>
    <ligand>
        <name>AMP</name>
        <dbReference type="ChEBI" id="CHEBI:456215"/>
    </ligand>
</feature>
<feature type="binding site" evidence="1">
    <location>
        <begin position="57"/>
        <end position="59"/>
    </location>
    <ligand>
        <name>AMP</name>
        <dbReference type="ChEBI" id="CHEBI:456215"/>
    </ligand>
</feature>
<feature type="binding site" evidence="1">
    <location>
        <begin position="85"/>
        <end position="88"/>
    </location>
    <ligand>
        <name>AMP</name>
        <dbReference type="ChEBI" id="CHEBI:456215"/>
    </ligand>
</feature>
<feature type="binding site" evidence="1">
    <location>
        <position position="92"/>
    </location>
    <ligand>
        <name>AMP</name>
        <dbReference type="ChEBI" id="CHEBI:456215"/>
    </ligand>
</feature>
<feature type="binding site" evidence="1">
    <location>
        <position position="127"/>
    </location>
    <ligand>
        <name>ATP</name>
        <dbReference type="ChEBI" id="CHEBI:30616"/>
    </ligand>
</feature>
<feature type="binding site" evidence="1">
    <location>
        <position position="139"/>
    </location>
    <ligand>
        <name>AMP</name>
        <dbReference type="ChEBI" id="CHEBI:456215"/>
    </ligand>
</feature>
<feature type="binding site" evidence="1">
    <location>
        <position position="150"/>
    </location>
    <ligand>
        <name>AMP</name>
        <dbReference type="ChEBI" id="CHEBI:456215"/>
    </ligand>
</feature>
<feature type="binding site" evidence="1">
    <location>
        <position position="178"/>
    </location>
    <ligand>
        <name>ATP</name>
        <dbReference type="ChEBI" id="CHEBI:30616"/>
    </ligand>
</feature>
<proteinExistence type="inferred from homology"/>
<gene>
    <name evidence="1" type="primary">adk</name>
    <name type="ordered locus">BruAb1_1217</name>
</gene>
<name>KAD_BRUAB</name>
<protein>
    <recommendedName>
        <fullName evidence="1">Adenylate kinase</fullName>
        <shortName evidence="1">AK</shortName>
        <ecNumber evidence="1">2.7.4.3</ecNumber>
    </recommendedName>
    <alternativeName>
        <fullName evidence="1">ATP-AMP transphosphorylase</fullName>
    </alternativeName>
    <alternativeName>
        <fullName evidence="1">ATP:AMP phosphotransferase</fullName>
    </alternativeName>
    <alternativeName>
        <fullName evidence="1">Adenylate monophosphate kinase</fullName>
    </alternativeName>
</protein>
<comment type="function">
    <text evidence="1">Catalyzes the reversible transfer of the terminal phosphate group between ATP and AMP. Plays an important role in cellular energy homeostasis and in adenine nucleotide metabolism.</text>
</comment>
<comment type="catalytic activity">
    <reaction evidence="1">
        <text>AMP + ATP = 2 ADP</text>
        <dbReference type="Rhea" id="RHEA:12973"/>
        <dbReference type="ChEBI" id="CHEBI:30616"/>
        <dbReference type="ChEBI" id="CHEBI:456215"/>
        <dbReference type="ChEBI" id="CHEBI:456216"/>
        <dbReference type="EC" id="2.7.4.3"/>
    </reaction>
</comment>
<comment type="pathway">
    <text evidence="1">Purine metabolism; AMP biosynthesis via salvage pathway; AMP from ADP: step 1/1.</text>
</comment>
<comment type="subunit">
    <text evidence="1">Monomer.</text>
</comment>
<comment type="subcellular location">
    <subcellularLocation>
        <location evidence="1">Cytoplasm</location>
    </subcellularLocation>
</comment>
<comment type="domain">
    <text evidence="1">Consists of three domains, a large central CORE domain and two small peripheral domains, NMPbind and LID, which undergo movements during catalysis. The LID domain closes over the site of phosphoryl transfer upon ATP binding. Assembling and dissambling the active center during each catalytic cycle provides an effective means to prevent ATP hydrolysis.</text>
</comment>
<comment type="similarity">
    <text evidence="1">Belongs to the adenylate kinase family.</text>
</comment>
<dbReference type="EC" id="2.7.4.3" evidence="1"/>
<dbReference type="EMBL" id="AE017223">
    <property type="protein sequence ID" value="AAX74555.1"/>
    <property type="molecule type" value="Genomic_DNA"/>
</dbReference>
<dbReference type="RefSeq" id="WP_002964341.1">
    <property type="nucleotide sequence ID" value="NC_006932.1"/>
</dbReference>
<dbReference type="SMR" id="Q57CS9"/>
<dbReference type="EnsemblBacteria" id="AAX74555">
    <property type="protein sequence ID" value="AAX74555"/>
    <property type="gene ID" value="BruAb1_1217"/>
</dbReference>
<dbReference type="KEGG" id="bmb:BruAb1_1217"/>
<dbReference type="HOGENOM" id="CLU_032354_4_1_5"/>
<dbReference type="UniPathway" id="UPA00588">
    <property type="reaction ID" value="UER00649"/>
</dbReference>
<dbReference type="Proteomes" id="UP000000540">
    <property type="component" value="Chromosome I"/>
</dbReference>
<dbReference type="GO" id="GO:0005737">
    <property type="term" value="C:cytoplasm"/>
    <property type="evidence" value="ECO:0007669"/>
    <property type="project" value="UniProtKB-SubCell"/>
</dbReference>
<dbReference type="GO" id="GO:0004017">
    <property type="term" value="F:adenylate kinase activity"/>
    <property type="evidence" value="ECO:0007669"/>
    <property type="project" value="UniProtKB-UniRule"/>
</dbReference>
<dbReference type="GO" id="GO:0005524">
    <property type="term" value="F:ATP binding"/>
    <property type="evidence" value="ECO:0007669"/>
    <property type="project" value="UniProtKB-UniRule"/>
</dbReference>
<dbReference type="GO" id="GO:0044209">
    <property type="term" value="P:AMP salvage"/>
    <property type="evidence" value="ECO:0007669"/>
    <property type="project" value="UniProtKB-UniRule"/>
</dbReference>
<dbReference type="CDD" id="cd01428">
    <property type="entry name" value="ADK"/>
    <property type="match status" value="1"/>
</dbReference>
<dbReference type="Gene3D" id="3.40.50.300">
    <property type="entry name" value="P-loop containing nucleotide triphosphate hydrolases"/>
    <property type="match status" value="1"/>
</dbReference>
<dbReference type="HAMAP" id="MF_00235">
    <property type="entry name" value="Adenylate_kinase_Adk"/>
    <property type="match status" value="1"/>
</dbReference>
<dbReference type="InterPro" id="IPR006259">
    <property type="entry name" value="Adenyl_kin_sub"/>
</dbReference>
<dbReference type="InterPro" id="IPR000850">
    <property type="entry name" value="Adenylat/UMP-CMP_kin"/>
</dbReference>
<dbReference type="InterPro" id="IPR033690">
    <property type="entry name" value="Adenylat_kinase_CS"/>
</dbReference>
<dbReference type="InterPro" id="IPR027417">
    <property type="entry name" value="P-loop_NTPase"/>
</dbReference>
<dbReference type="NCBIfam" id="TIGR01351">
    <property type="entry name" value="adk"/>
    <property type="match status" value="1"/>
</dbReference>
<dbReference type="NCBIfam" id="NF001381">
    <property type="entry name" value="PRK00279.1-3"/>
    <property type="match status" value="1"/>
</dbReference>
<dbReference type="NCBIfam" id="NF011100">
    <property type="entry name" value="PRK14527.1"/>
    <property type="match status" value="1"/>
</dbReference>
<dbReference type="NCBIfam" id="NF011101">
    <property type="entry name" value="PRK14528.1"/>
    <property type="match status" value="1"/>
</dbReference>
<dbReference type="NCBIfam" id="NF011104">
    <property type="entry name" value="PRK14531.1"/>
    <property type="match status" value="1"/>
</dbReference>
<dbReference type="NCBIfam" id="NF011105">
    <property type="entry name" value="PRK14532.1"/>
    <property type="match status" value="1"/>
</dbReference>
<dbReference type="PANTHER" id="PTHR23359">
    <property type="entry name" value="NUCLEOTIDE KINASE"/>
    <property type="match status" value="1"/>
</dbReference>
<dbReference type="Pfam" id="PF00406">
    <property type="entry name" value="ADK"/>
    <property type="match status" value="1"/>
</dbReference>
<dbReference type="PRINTS" id="PR00094">
    <property type="entry name" value="ADENYLTKNASE"/>
</dbReference>
<dbReference type="SUPFAM" id="SSF52540">
    <property type="entry name" value="P-loop containing nucleoside triphosphate hydrolases"/>
    <property type="match status" value="1"/>
</dbReference>
<dbReference type="PROSITE" id="PS00113">
    <property type="entry name" value="ADENYLATE_KINASE"/>
    <property type="match status" value="1"/>
</dbReference>
<accession>Q57CS9</accession>
<organism>
    <name type="scientific">Brucella abortus biovar 1 (strain 9-941)</name>
    <dbReference type="NCBI Taxonomy" id="262698"/>
    <lineage>
        <taxon>Bacteria</taxon>
        <taxon>Pseudomonadati</taxon>
        <taxon>Pseudomonadota</taxon>
        <taxon>Alphaproteobacteria</taxon>
        <taxon>Hyphomicrobiales</taxon>
        <taxon>Brucellaceae</taxon>
        <taxon>Brucella/Ochrobactrum group</taxon>
        <taxon>Brucella</taxon>
    </lineage>
</organism>
<keyword id="KW-0067">ATP-binding</keyword>
<keyword id="KW-0963">Cytoplasm</keyword>
<keyword id="KW-0418">Kinase</keyword>
<keyword id="KW-0545">Nucleotide biosynthesis</keyword>
<keyword id="KW-0547">Nucleotide-binding</keyword>
<keyword id="KW-0808">Transferase</keyword>